<protein>
    <recommendedName>
        <fullName>Synaptobrevin homolog YKT6</fullName>
        <ecNumber>2.3.1.-</ecNumber>
    </recommendedName>
</protein>
<sequence length="198" mass="22314">MKLYSLSVLYKGDPKAVLLKAAYDVSSFSFFQRSSVQEFMTFTSQLIVERSGKGSRASVKEQEYLCHVYVRSDSLAGVVIADSEYPSRVAFTLLEKVLDEFSKQVDRIDWPVGSPATIQYTGLDDHLSKYQNPREADPMSKVQAELDETKIILHNTMESLLERGEKLDDLVSKSEVLGTQSKAFYKTARKQNSCCAIM</sequence>
<dbReference type="EC" id="2.3.1.-"/>
<dbReference type="EMBL" id="AF076956">
    <property type="protein sequence ID" value="AAC26834.1"/>
    <property type="molecule type" value="mRNA"/>
</dbReference>
<dbReference type="EMBL" id="AK002916">
    <property type="protein sequence ID" value="BAB22455.1"/>
    <property type="molecule type" value="mRNA"/>
</dbReference>
<dbReference type="EMBL" id="AK007486">
    <property type="protein sequence ID" value="BAB25062.1"/>
    <property type="molecule type" value="mRNA"/>
</dbReference>
<dbReference type="EMBL" id="AK147098">
    <property type="protein sequence ID" value="BAE27674.1"/>
    <property type="molecule type" value="mRNA"/>
</dbReference>
<dbReference type="EMBL" id="AK150472">
    <property type="protein sequence ID" value="BAE29589.1"/>
    <property type="molecule type" value="mRNA"/>
</dbReference>
<dbReference type="EMBL" id="AK159253">
    <property type="protein sequence ID" value="BAE34934.1"/>
    <property type="molecule type" value="mRNA"/>
</dbReference>
<dbReference type="EMBL" id="AL645469">
    <property type="status" value="NOT_ANNOTATED_CDS"/>
    <property type="molecule type" value="Genomic_DNA"/>
</dbReference>
<dbReference type="EMBL" id="BC006760">
    <property type="protein sequence ID" value="AAH06760.1"/>
    <property type="molecule type" value="mRNA"/>
</dbReference>
<dbReference type="CCDS" id="CCDS24410.1"/>
<dbReference type="RefSeq" id="NP_062635.2">
    <property type="nucleotide sequence ID" value="NM_019661.4"/>
</dbReference>
<dbReference type="SMR" id="Q9CQW1"/>
<dbReference type="BioGRID" id="207964">
    <property type="interactions" value="10"/>
</dbReference>
<dbReference type="FunCoup" id="Q9CQW1">
    <property type="interactions" value="3795"/>
</dbReference>
<dbReference type="IntAct" id="Q9CQW1">
    <property type="interactions" value="1"/>
</dbReference>
<dbReference type="MINT" id="Q9CQW1"/>
<dbReference type="STRING" id="10090.ENSMUSP00000002818"/>
<dbReference type="iPTMnet" id="Q9CQW1"/>
<dbReference type="PhosphoSitePlus" id="Q9CQW1"/>
<dbReference type="SwissPalm" id="Q9CQW1"/>
<dbReference type="PaxDb" id="10090-ENSMUSP00000002818"/>
<dbReference type="PeptideAtlas" id="Q9CQW1"/>
<dbReference type="ProteomicsDB" id="299616"/>
<dbReference type="Pumba" id="Q9CQW1"/>
<dbReference type="Antibodypedia" id="27085">
    <property type="antibodies" value="69 antibodies from 18 providers"/>
</dbReference>
<dbReference type="DNASU" id="56418"/>
<dbReference type="Ensembl" id="ENSMUST00000002818.9">
    <property type="protein sequence ID" value="ENSMUSP00000002818.9"/>
    <property type="gene ID" value="ENSMUSG00000002741.10"/>
</dbReference>
<dbReference type="GeneID" id="56418"/>
<dbReference type="KEGG" id="mmu:56418"/>
<dbReference type="UCSC" id="uc007hxp.3">
    <property type="organism name" value="mouse"/>
</dbReference>
<dbReference type="AGR" id="MGI:1927550"/>
<dbReference type="CTD" id="10652"/>
<dbReference type="MGI" id="MGI:1927550">
    <property type="gene designation" value="Ykt6"/>
</dbReference>
<dbReference type="VEuPathDB" id="HostDB:ENSMUSG00000002741"/>
<dbReference type="eggNOG" id="KOG0861">
    <property type="taxonomic scope" value="Eukaryota"/>
</dbReference>
<dbReference type="GeneTree" id="ENSGT00390000015164"/>
<dbReference type="HOGENOM" id="CLU_074848_3_0_1"/>
<dbReference type="InParanoid" id="Q9CQW1"/>
<dbReference type="OMA" id="HYIGIIR"/>
<dbReference type="OrthoDB" id="27923at2759"/>
<dbReference type="PhylomeDB" id="Q9CQW1"/>
<dbReference type="TreeFam" id="TF105606"/>
<dbReference type="Reactome" id="R-MMU-204005">
    <property type="pathway name" value="COPII-mediated vesicle transport"/>
</dbReference>
<dbReference type="Reactome" id="R-MMU-6807878">
    <property type="pathway name" value="COPI-mediated anterograde transport"/>
</dbReference>
<dbReference type="Reactome" id="R-MMU-6811438">
    <property type="pathway name" value="Intra-Golgi traffic"/>
</dbReference>
<dbReference type="Reactome" id="R-MMU-8980692">
    <property type="pathway name" value="RHOA GTPase cycle"/>
</dbReference>
<dbReference type="Reactome" id="R-MMU-9013148">
    <property type="pathway name" value="CDC42 GTPase cycle"/>
</dbReference>
<dbReference type="Reactome" id="R-MMU-9013149">
    <property type="pathway name" value="RAC1 GTPase cycle"/>
</dbReference>
<dbReference type="Reactome" id="R-MMU-9013408">
    <property type="pathway name" value="RHOG GTPase cycle"/>
</dbReference>
<dbReference type="Reactome" id="R-MMU-9013423">
    <property type="pathway name" value="RAC3 GTPase cycle"/>
</dbReference>
<dbReference type="BioGRID-ORCS" id="56418">
    <property type="hits" value="25 hits in 76 CRISPR screens"/>
</dbReference>
<dbReference type="CD-CODE" id="CE726F99">
    <property type="entry name" value="Postsynaptic density"/>
</dbReference>
<dbReference type="ChiTaRS" id="Ykt6">
    <property type="organism name" value="mouse"/>
</dbReference>
<dbReference type="PRO" id="PR:Q9CQW1"/>
<dbReference type="Proteomes" id="UP000000589">
    <property type="component" value="Chromosome 11"/>
</dbReference>
<dbReference type="RNAct" id="Q9CQW1">
    <property type="molecule type" value="protein"/>
</dbReference>
<dbReference type="Bgee" id="ENSMUSG00000002741">
    <property type="expression patterns" value="Expressed in cortical plate and 257 other cell types or tissues"/>
</dbReference>
<dbReference type="GO" id="GO:0097440">
    <property type="term" value="C:apical dendrite"/>
    <property type="evidence" value="ECO:0007669"/>
    <property type="project" value="Ensembl"/>
</dbReference>
<dbReference type="GO" id="GO:0097441">
    <property type="term" value="C:basal dendrite"/>
    <property type="evidence" value="ECO:0007669"/>
    <property type="project" value="Ensembl"/>
</dbReference>
<dbReference type="GO" id="GO:0030659">
    <property type="term" value="C:cytoplasmic vesicle membrane"/>
    <property type="evidence" value="ECO:0007669"/>
    <property type="project" value="UniProtKB-SubCell"/>
</dbReference>
<dbReference type="GO" id="GO:0005829">
    <property type="term" value="C:cytosol"/>
    <property type="evidence" value="ECO:0007669"/>
    <property type="project" value="UniProtKB-SubCell"/>
</dbReference>
<dbReference type="GO" id="GO:0005783">
    <property type="term" value="C:endoplasmic reticulum"/>
    <property type="evidence" value="ECO:0000250"/>
    <property type="project" value="HGNC-UCL"/>
</dbReference>
<dbReference type="GO" id="GO:0005768">
    <property type="term" value="C:endosome"/>
    <property type="evidence" value="ECO:0007669"/>
    <property type="project" value="Ensembl"/>
</dbReference>
<dbReference type="GO" id="GO:0000139">
    <property type="term" value="C:Golgi membrane"/>
    <property type="evidence" value="ECO:0007669"/>
    <property type="project" value="UniProtKB-SubCell"/>
</dbReference>
<dbReference type="GO" id="GO:0005739">
    <property type="term" value="C:mitochondrion"/>
    <property type="evidence" value="ECO:0007669"/>
    <property type="project" value="Ensembl"/>
</dbReference>
<dbReference type="GO" id="GO:0043025">
    <property type="term" value="C:neuronal cell body"/>
    <property type="evidence" value="ECO:0007669"/>
    <property type="project" value="Ensembl"/>
</dbReference>
<dbReference type="GO" id="GO:0005886">
    <property type="term" value="C:plasma membrane"/>
    <property type="evidence" value="ECO:0000250"/>
    <property type="project" value="HGNC-UCL"/>
</dbReference>
<dbReference type="GO" id="GO:0031201">
    <property type="term" value="C:SNARE complex"/>
    <property type="evidence" value="ECO:0007669"/>
    <property type="project" value="Ensembl"/>
</dbReference>
<dbReference type="GO" id="GO:0019706">
    <property type="term" value="F:protein-cysteine S-palmitoyltransferase activity"/>
    <property type="evidence" value="ECO:0000250"/>
    <property type="project" value="HGNC-UCL"/>
</dbReference>
<dbReference type="GO" id="GO:0005484">
    <property type="term" value="F:SNAP receptor activity"/>
    <property type="evidence" value="ECO:0007669"/>
    <property type="project" value="Ensembl"/>
</dbReference>
<dbReference type="GO" id="GO:0006888">
    <property type="term" value="P:endoplasmic reticulum to Golgi vesicle-mediated transport"/>
    <property type="evidence" value="ECO:0000250"/>
    <property type="project" value="HGNC-UCL"/>
</dbReference>
<dbReference type="GO" id="GO:0015031">
    <property type="term" value="P:protein transport"/>
    <property type="evidence" value="ECO:0007669"/>
    <property type="project" value="UniProtKB-KW"/>
</dbReference>
<dbReference type="GO" id="GO:0042147">
    <property type="term" value="P:retrograde transport, endosome to Golgi"/>
    <property type="evidence" value="ECO:0007669"/>
    <property type="project" value="Ensembl"/>
</dbReference>
<dbReference type="GO" id="GO:0006904">
    <property type="term" value="P:vesicle docking involved in exocytosis"/>
    <property type="evidence" value="ECO:0000250"/>
    <property type="project" value="HGNC-UCL"/>
</dbReference>
<dbReference type="GO" id="GO:0006903">
    <property type="term" value="P:vesicle targeting"/>
    <property type="evidence" value="ECO:0000250"/>
    <property type="project" value="HGNC-UCL"/>
</dbReference>
<dbReference type="CDD" id="cd14824">
    <property type="entry name" value="Longin"/>
    <property type="match status" value="1"/>
</dbReference>
<dbReference type="CDD" id="cd15867">
    <property type="entry name" value="R-SNARE_YKT6"/>
    <property type="match status" value="1"/>
</dbReference>
<dbReference type="FunFam" id="3.30.450.50:FF:000013">
    <property type="entry name" value="Synaptobrevin homolog YKT6"/>
    <property type="match status" value="1"/>
</dbReference>
<dbReference type="FunFam" id="1.20.5.110:FF:000020">
    <property type="entry name" value="synaptobrevin homolog YKT6"/>
    <property type="match status" value="1"/>
</dbReference>
<dbReference type="Gene3D" id="1.20.5.110">
    <property type="match status" value="1"/>
</dbReference>
<dbReference type="Gene3D" id="3.30.450.50">
    <property type="entry name" value="Longin domain"/>
    <property type="match status" value="1"/>
</dbReference>
<dbReference type="InterPro" id="IPR011012">
    <property type="entry name" value="Longin-like_dom_sf"/>
</dbReference>
<dbReference type="InterPro" id="IPR010908">
    <property type="entry name" value="Longin_dom"/>
</dbReference>
<dbReference type="InterPro" id="IPR045848">
    <property type="entry name" value="R-SNARE_YKT6"/>
</dbReference>
<dbReference type="InterPro" id="IPR042855">
    <property type="entry name" value="V_SNARE_CC"/>
</dbReference>
<dbReference type="PANTHER" id="PTHR45806">
    <property type="entry name" value="SYNAPTOBREVIN HOMOLOG YKT6"/>
    <property type="match status" value="1"/>
</dbReference>
<dbReference type="PANTHER" id="PTHR45806:SF1">
    <property type="entry name" value="SYNAPTOBREVIN HOMOLOG YKT6"/>
    <property type="match status" value="1"/>
</dbReference>
<dbReference type="Pfam" id="PF13774">
    <property type="entry name" value="Longin"/>
    <property type="match status" value="1"/>
</dbReference>
<dbReference type="Pfam" id="PF00957">
    <property type="entry name" value="Synaptobrevin"/>
    <property type="match status" value="1"/>
</dbReference>
<dbReference type="SMART" id="SM01270">
    <property type="entry name" value="Longin"/>
    <property type="match status" value="1"/>
</dbReference>
<dbReference type="SUPFAM" id="SSF58038">
    <property type="entry name" value="SNARE fusion complex"/>
    <property type="match status" value="1"/>
</dbReference>
<dbReference type="SUPFAM" id="SSF64356">
    <property type="entry name" value="SNARE-like"/>
    <property type="match status" value="1"/>
</dbReference>
<dbReference type="PROSITE" id="PS50859">
    <property type="entry name" value="LONGIN"/>
    <property type="match status" value="1"/>
</dbReference>
<dbReference type="PROSITE" id="PS50892">
    <property type="entry name" value="V_SNARE"/>
    <property type="match status" value="1"/>
</dbReference>
<proteinExistence type="evidence at protein level"/>
<comment type="function">
    <text evidence="2">Vesicular soluble NSF attachment protein receptor (v-SNARE) mediating vesicle docking and fusion to a specific acceptor cellular compartment. Functions in endoplasmic reticulum to Golgi transport; as part of a SNARE complex composed of GOSR1, GOSR2 and STX5. Functions in early/recycling endosome to TGN transport; as part of a SNARE complex composed of BET1L, GOSR1 and STX5. Has a S-palmitoyl transferase activity.</text>
</comment>
<comment type="subunit">
    <text evidence="3">Identified in 2 different SNARE complexes; the first one composed of GOSR1, GOSR2 and STX5 and the second one composed of BET1L, GOSR1 and STX5.</text>
</comment>
<comment type="subcellular location">
    <subcellularLocation>
        <location evidence="1">Cytoplasm</location>
        <location evidence="1">Cytosol</location>
    </subcellularLocation>
    <subcellularLocation>
        <location evidence="1">Cytoplasmic vesicle membrane</location>
        <topology evidence="1">Lipid-anchor</topology>
        <orientation evidence="1">Cytoplasmic side</orientation>
    </subcellularLocation>
    <subcellularLocation>
        <location evidence="1">Golgi apparatus membrane</location>
        <topology evidence="1">Lipid-anchor</topology>
        <orientation evidence="1">Cytoplasmic side</orientation>
    </subcellularLocation>
    <text evidence="1">Probably cycles through vesicles between Golgi and endosomes.</text>
</comment>
<comment type="domain">
    <text evidence="1">The longin domain regulates palmitoylation and membrane targeting.</text>
</comment>
<comment type="PTM">
    <text evidence="2">Palmitoylated; catalyzes its own palmitoylation. Palmitoylation is required for Golgi targeting.</text>
</comment>
<comment type="PTM">
    <text evidence="2">Farnesylation is required for Golgi targeting.</text>
</comment>
<comment type="similarity">
    <text evidence="6">Belongs to the synaptobrevin family.</text>
</comment>
<gene>
    <name type="primary">Ykt6</name>
</gene>
<organism>
    <name type="scientific">Mus musculus</name>
    <name type="common">Mouse</name>
    <dbReference type="NCBI Taxonomy" id="10090"/>
    <lineage>
        <taxon>Eukaryota</taxon>
        <taxon>Metazoa</taxon>
        <taxon>Chordata</taxon>
        <taxon>Craniata</taxon>
        <taxon>Vertebrata</taxon>
        <taxon>Euteleostomi</taxon>
        <taxon>Mammalia</taxon>
        <taxon>Eutheria</taxon>
        <taxon>Euarchontoglires</taxon>
        <taxon>Glires</taxon>
        <taxon>Rodentia</taxon>
        <taxon>Myomorpha</taxon>
        <taxon>Muroidea</taxon>
        <taxon>Muridae</taxon>
        <taxon>Murinae</taxon>
        <taxon>Mus</taxon>
        <taxon>Mus</taxon>
    </lineage>
</organism>
<feature type="chain" id="PRO_0000280710" description="Synaptobrevin homolog YKT6">
    <location>
        <begin position="1"/>
        <end position="195"/>
    </location>
</feature>
<feature type="propeptide" id="PRO_0000396662" description="Removed in mature form" evidence="1">
    <location>
        <begin position="196"/>
        <end position="198"/>
    </location>
</feature>
<feature type="domain" description="Longin" evidence="4">
    <location>
        <begin position="8"/>
        <end position="131"/>
    </location>
</feature>
<feature type="domain" description="v-SNARE coiled-coil homology" evidence="5">
    <location>
        <begin position="138"/>
        <end position="198"/>
    </location>
</feature>
<feature type="modified residue" description="Phosphoserine" evidence="2">
    <location>
        <position position="159"/>
    </location>
</feature>
<feature type="modified residue" description="Cysteine methyl ester" evidence="1">
    <location>
        <position position="195"/>
    </location>
</feature>
<feature type="lipid moiety-binding region" description="S-palmitoyl cysteine" evidence="1">
    <location>
        <position position="194"/>
    </location>
</feature>
<feature type="lipid moiety-binding region" description="S-farnesyl cysteine" evidence="1">
    <location>
        <position position="195"/>
    </location>
</feature>
<feature type="sequence conflict" description="In Ref. 1; AAC26834." evidence="6" ref="1">
    <original>E</original>
    <variation>D</variation>
    <location>
        <position position="95"/>
    </location>
</feature>
<feature type="sequence conflict" description="In Ref. 1; AAC26834." evidence="6" ref="1">
    <original>E</original>
    <variation>V</variation>
    <location>
        <position position="165"/>
    </location>
</feature>
<name>YKT6_MOUSE</name>
<reference key="1">
    <citation type="journal article" date="2001" name="J. Biol. Chem.">
        <title>Ykt6 forms a SNARE complex with syntaxin 5, GS28, and Bet1 and participates in a late stage in endoplasmic reticulum-Golgi transport.</title>
        <authorList>
            <person name="Zhang T."/>
            <person name="Hong W."/>
        </authorList>
    </citation>
    <scope>NUCLEOTIDE SEQUENCE [MRNA]</scope>
    <source>
        <tissue>Kidney</tissue>
    </source>
</reference>
<reference key="2">
    <citation type="journal article" date="2005" name="Science">
        <title>The transcriptional landscape of the mammalian genome.</title>
        <authorList>
            <person name="Carninci P."/>
            <person name="Kasukawa T."/>
            <person name="Katayama S."/>
            <person name="Gough J."/>
            <person name="Frith M.C."/>
            <person name="Maeda N."/>
            <person name="Oyama R."/>
            <person name="Ravasi T."/>
            <person name="Lenhard B."/>
            <person name="Wells C."/>
            <person name="Kodzius R."/>
            <person name="Shimokawa K."/>
            <person name="Bajic V.B."/>
            <person name="Brenner S.E."/>
            <person name="Batalov S."/>
            <person name="Forrest A.R."/>
            <person name="Zavolan M."/>
            <person name="Davis M.J."/>
            <person name="Wilming L.G."/>
            <person name="Aidinis V."/>
            <person name="Allen J.E."/>
            <person name="Ambesi-Impiombato A."/>
            <person name="Apweiler R."/>
            <person name="Aturaliya R.N."/>
            <person name="Bailey T.L."/>
            <person name="Bansal M."/>
            <person name="Baxter L."/>
            <person name="Beisel K.W."/>
            <person name="Bersano T."/>
            <person name="Bono H."/>
            <person name="Chalk A.M."/>
            <person name="Chiu K.P."/>
            <person name="Choudhary V."/>
            <person name="Christoffels A."/>
            <person name="Clutterbuck D.R."/>
            <person name="Crowe M.L."/>
            <person name="Dalla E."/>
            <person name="Dalrymple B.P."/>
            <person name="de Bono B."/>
            <person name="Della Gatta G."/>
            <person name="di Bernardo D."/>
            <person name="Down T."/>
            <person name="Engstrom P."/>
            <person name="Fagiolini M."/>
            <person name="Faulkner G."/>
            <person name="Fletcher C.F."/>
            <person name="Fukushima T."/>
            <person name="Furuno M."/>
            <person name="Futaki S."/>
            <person name="Gariboldi M."/>
            <person name="Georgii-Hemming P."/>
            <person name="Gingeras T.R."/>
            <person name="Gojobori T."/>
            <person name="Green R.E."/>
            <person name="Gustincich S."/>
            <person name="Harbers M."/>
            <person name="Hayashi Y."/>
            <person name="Hensch T.K."/>
            <person name="Hirokawa N."/>
            <person name="Hill D."/>
            <person name="Huminiecki L."/>
            <person name="Iacono M."/>
            <person name="Ikeo K."/>
            <person name="Iwama A."/>
            <person name="Ishikawa T."/>
            <person name="Jakt M."/>
            <person name="Kanapin A."/>
            <person name="Katoh M."/>
            <person name="Kawasawa Y."/>
            <person name="Kelso J."/>
            <person name="Kitamura H."/>
            <person name="Kitano H."/>
            <person name="Kollias G."/>
            <person name="Krishnan S.P."/>
            <person name="Kruger A."/>
            <person name="Kummerfeld S.K."/>
            <person name="Kurochkin I.V."/>
            <person name="Lareau L.F."/>
            <person name="Lazarevic D."/>
            <person name="Lipovich L."/>
            <person name="Liu J."/>
            <person name="Liuni S."/>
            <person name="McWilliam S."/>
            <person name="Madan Babu M."/>
            <person name="Madera M."/>
            <person name="Marchionni L."/>
            <person name="Matsuda H."/>
            <person name="Matsuzawa S."/>
            <person name="Miki H."/>
            <person name="Mignone F."/>
            <person name="Miyake S."/>
            <person name="Morris K."/>
            <person name="Mottagui-Tabar S."/>
            <person name="Mulder N."/>
            <person name="Nakano N."/>
            <person name="Nakauchi H."/>
            <person name="Ng P."/>
            <person name="Nilsson R."/>
            <person name="Nishiguchi S."/>
            <person name="Nishikawa S."/>
            <person name="Nori F."/>
            <person name="Ohara O."/>
            <person name="Okazaki Y."/>
            <person name="Orlando V."/>
            <person name="Pang K.C."/>
            <person name="Pavan W.J."/>
            <person name="Pavesi G."/>
            <person name="Pesole G."/>
            <person name="Petrovsky N."/>
            <person name="Piazza S."/>
            <person name="Reed J."/>
            <person name="Reid J.F."/>
            <person name="Ring B.Z."/>
            <person name="Ringwald M."/>
            <person name="Rost B."/>
            <person name="Ruan Y."/>
            <person name="Salzberg S.L."/>
            <person name="Sandelin A."/>
            <person name="Schneider C."/>
            <person name="Schoenbach C."/>
            <person name="Sekiguchi K."/>
            <person name="Semple C.A."/>
            <person name="Seno S."/>
            <person name="Sessa L."/>
            <person name="Sheng Y."/>
            <person name="Shibata Y."/>
            <person name="Shimada H."/>
            <person name="Shimada K."/>
            <person name="Silva D."/>
            <person name="Sinclair B."/>
            <person name="Sperling S."/>
            <person name="Stupka E."/>
            <person name="Sugiura K."/>
            <person name="Sultana R."/>
            <person name="Takenaka Y."/>
            <person name="Taki K."/>
            <person name="Tammoja K."/>
            <person name="Tan S.L."/>
            <person name="Tang S."/>
            <person name="Taylor M.S."/>
            <person name="Tegner J."/>
            <person name="Teichmann S.A."/>
            <person name="Ueda H.R."/>
            <person name="van Nimwegen E."/>
            <person name="Verardo R."/>
            <person name="Wei C.L."/>
            <person name="Yagi K."/>
            <person name="Yamanishi H."/>
            <person name="Zabarovsky E."/>
            <person name="Zhu S."/>
            <person name="Zimmer A."/>
            <person name="Hide W."/>
            <person name="Bult C."/>
            <person name="Grimmond S.M."/>
            <person name="Teasdale R.D."/>
            <person name="Liu E.T."/>
            <person name="Brusic V."/>
            <person name="Quackenbush J."/>
            <person name="Wahlestedt C."/>
            <person name="Mattick J.S."/>
            <person name="Hume D.A."/>
            <person name="Kai C."/>
            <person name="Sasaki D."/>
            <person name="Tomaru Y."/>
            <person name="Fukuda S."/>
            <person name="Kanamori-Katayama M."/>
            <person name="Suzuki M."/>
            <person name="Aoki J."/>
            <person name="Arakawa T."/>
            <person name="Iida J."/>
            <person name="Imamura K."/>
            <person name="Itoh M."/>
            <person name="Kato T."/>
            <person name="Kawaji H."/>
            <person name="Kawagashira N."/>
            <person name="Kawashima T."/>
            <person name="Kojima M."/>
            <person name="Kondo S."/>
            <person name="Konno H."/>
            <person name="Nakano K."/>
            <person name="Ninomiya N."/>
            <person name="Nishio T."/>
            <person name="Okada M."/>
            <person name="Plessy C."/>
            <person name="Shibata K."/>
            <person name="Shiraki T."/>
            <person name="Suzuki S."/>
            <person name="Tagami M."/>
            <person name="Waki K."/>
            <person name="Watahiki A."/>
            <person name="Okamura-Oho Y."/>
            <person name="Suzuki H."/>
            <person name="Kawai J."/>
            <person name="Hayashizaki Y."/>
        </authorList>
    </citation>
    <scope>NUCLEOTIDE SEQUENCE [LARGE SCALE MRNA]</scope>
    <source>
        <strain>C57BL/6J</strain>
        <tissue>Amnion</tissue>
        <tissue>Bone marrow</tissue>
        <tissue>Kidney</tissue>
        <tissue>Pancreas</tissue>
    </source>
</reference>
<reference key="3">
    <citation type="journal article" date="2009" name="PLoS Biol.">
        <title>Lineage-specific biology revealed by a finished genome assembly of the mouse.</title>
        <authorList>
            <person name="Church D.M."/>
            <person name="Goodstadt L."/>
            <person name="Hillier L.W."/>
            <person name="Zody M.C."/>
            <person name="Goldstein S."/>
            <person name="She X."/>
            <person name="Bult C.J."/>
            <person name="Agarwala R."/>
            <person name="Cherry J.L."/>
            <person name="DiCuccio M."/>
            <person name="Hlavina W."/>
            <person name="Kapustin Y."/>
            <person name="Meric P."/>
            <person name="Maglott D."/>
            <person name="Birtle Z."/>
            <person name="Marques A.C."/>
            <person name="Graves T."/>
            <person name="Zhou S."/>
            <person name="Teague B."/>
            <person name="Potamousis K."/>
            <person name="Churas C."/>
            <person name="Place M."/>
            <person name="Herschleb J."/>
            <person name="Runnheim R."/>
            <person name="Forrest D."/>
            <person name="Amos-Landgraf J."/>
            <person name="Schwartz D.C."/>
            <person name="Cheng Z."/>
            <person name="Lindblad-Toh K."/>
            <person name="Eichler E.E."/>
            <person name="Ponting C.P."/>
        </authorList>
    </citation>
    <scope>NUCLEOTIDE SEQUENCE [LARGE SCALE GENOMIC DNA]</scope>
    <source>
        <strain>C57BL/6J</strain>
    </source>
</reference>
<reference key="4">
    <citation type="journal article" date="2004" name="Genome Res.">
        <title>The status, quality, and expansion of the NIH full-length cDNA project: the Mammalian Gene Collection (MGC).</title>
        <authorList>
            <consortium name="The MGC Project Team"/>
        </authorList>
    </citation>
    <scope>NUCLEOTIDE SEQUENCE [LARGE SCALE MRNA]</scope>
    <source>
        <strain>NMRI</strain>
        <tissue>Mammary tumor</tissue>
    </source>
</reference>
<reference key="5">
    <citation type="journal article" date="2010" name="Cell">
        <title>A tissue-specific atlas of mouse protein phosphorylation and expression.</title>
        <authorList>
            <person name="Huttlin E.L."/>
            <person name="Jedrychowski M.P."/>
            <person name="Elias J.E."/>
            <person name="Goswami T."/>
            <person name="Rad R."/>
            <person name="Beausoleil S.A."/>
            <person name="Villen J."/>
            <person name="Haas W."/>
            <person name="Sowa M.E."/>
            <person name="Gygi S.P."/>
        </authorList>
    </citation>
    <scope>IDENTIFICATION BY MASS SPECTROMETRY [LARGE SCALE ANALYSIS]</scope>
    <source>
        <tissue>Brain</tissue>
        <tissue>Brown adipose tissue</tissue>
        <tissue>Heart</tissue>
        <tissue>Kidney</tissue>
        <tissue>Liver</tissue>
        <tissue>Lung</tissue>
        <tissue>Pancreas</tissue>
        <tissue>Spleen</tissue>
        <tissue>Testis</tissue>
    </source>
</reference>
<evidence type="ECO:0000250" key="1"/>
<evidence type="ECO:0000250" key="2">
    <source>
        <dbReference type="UniProtKB" id="O15498"/>
    </source>
</evidence>
<evidence type="ECO:0000250" key="3">
    <source>
        <dbReference type="UniProtKB" id="Q5EGY4"/>
    </source>
</evidence>
<evidence type="ECO:0000255" key="4">
    <source>
        <dbReference type="PROSITE-ProRule" id="PRU00231"/>
    </source>
</evidence>
<evidence type="ECO:0000255" key="5">
    <source>
        <dbReference type="PROSITE-ProRule" id="PRU00290"/>
    </source>
</evidence>
<evidence type="ECO:0000305" key="6"/>
<accession>Q9CQW1</accession>
<accession>O88595</accession>
<keyword id="KW-0175">Coiled coil</keyword>
<keyword id="KW-0963">Cytoplasm</keyword>
<keyword id="KW-0968">Cytoplasmic vesicle</keyword>
<keyword id="KW-0931">ER-Golgi transport</keyword>
<keyword id="KW-0333">Golgi apparatus</keyword>
<keyword id="KW-0449">Lipoprotein</keyword>
<keyword id="KW-0472">Membrane</keyword>
<keyword id="KW-0488">Methylation</keyword>
<keyword id="KW-0564">Palmitate</keyword>
<keyword id="KW-0597">Phosphoprotein</keyword>
<keyword id="KW-0636">Prenylation</keyword>
<keyword id="KW-0653">Protein transport</keyword>
<keyword id="KW-1185">Reference proteome</keyword>
<keyword id="KW-0808">Transferase</keyword>
<keyword id="KW-0813">Transport</keyword>